<keyword id="KW-0963">Cytoplasm</keyword>
<keyword id="KW-0238">DNA-binding</keyword>
<keyword id="KW-1185">Reference proteome</keyword>
<keyword id="KW-0677">Repeat</keyword>
<keyword id="KW-0678">Repressor</keyword>
<keyword id="KW-0804">Transcription</keyword>
<keyword id="KW-0805">Transcription regulation</keyword>
<protein>
    <recommendedName>
        <fullName>Transcriptional regulator MraZ</fullName>
    </recommendedName>
</protein>
<feature type="chain" id="PRO_1000148854" description="Transcriptional regulator MraZ">
    <location>
        <begin position="1"/>
        <end position="152"/>
    </location>
</feature>
<feature type="domain" description="SpoVT-AbrB 1" evidence="2">
    <location>
        <begin position="5"/>
        <end position="52"/>
    </location>
</feature>
<feature type="domain" description="SpoVT-AbrB 2" evidence="2">
    <location>
        <begin position="81"/>
        <end position="124"/>
    </location>
</feature>
<accession>B7UID1</accession>
<gene>
    <name evidence="1" type="primary">mraZ</name>
    <name type="ordered locus">E2348C_0086</name>
</gene>
<organism>
    <name type="scientific">Escherichia coli O127:H6 (strain E2348/69 / EPEC)</name>
    <dbReference type="NCBI Taxonomy" id="574521"/>
    <lineage>
        <taxon>Bacteria</taxon>
        <taxon>Pseudomonadati</taxon>
        <taxon>Pseudomonadota</taxon>
        <taxon>Gammaproteobacteria</taxon>
        <taxon>Enterobacterales</taxon>
        <taxon>Enterobacteriaceae</taxon>
        <taxon>Escherichia</taxon>
    </lineage>
</organism>
<comment type="function">
    <text evidence="1">Negatively regulates its own expression and that of the subsequent genes in the proximal part of the division and cell wall (dcw) gene cluster. Acts by binding directly to DNA. May also regulate the expression of genes outside the dcw cluster.</text>
</comment>
<comment type="subunit">
    <text evidence="1">Forms oligomers.</text>
</comment>
<comment type="subcellular location">
    <subcellularLocation>
        <location evidence="1">Cytoplasm</location>
        <location evidence="1">Nucleoid</location>
    </subcellularLocation>
</comment>
<comment type="similarity">
    <text evidence="1">Belongs to the MraZ family.</text>
</comment>
<proteinExistence type="inferred from homology"/>
<dbReference type="EMBL" id="FM180568">
    <property type="protein sequence ID" value="CAS07634.1"/>
    <property type="molecule type" value="Genomic_DNA"/>
</dbReference>
<dbReference type="RefSeq" id="WP_001339537.1">
    <property type="nucleotide sequence ID" value="NC_011601.1"/>
</dbReference>
<dbReference type="SMR" id="B7UID1"/>
<dbReference type="KEGG" id="ecg:E2348C_0086"/>
<dbReference type="HOGENOM" id="CLU_107907_2_0_6"/>
<dbReference type="Proteomes" id="UP000008205">
    <property type="component" value="Chromosome"/>
</dbReference>
<dbReference type="GO" id="GO:0005737">
    <property type="term" value="C:cytoplasm"/>
    <property type="evidence" value="ECO:0007669"/>
    <property type="project" value="UniProtKB-UniRule"/>
</dbReference>
<dbReference type="GO" id="GO:0009295">
    <property type="term" value="C:nucleoid"/>
    <property type="evidence" value="ECO:0007669"/>
    <property type="project" value="UniProtKB-SubCell"/>
</dbReference>
<dbReference type="GO" id="GO:0003700">
    <property type="term" value="F:DNA-binding transcription factor activity"/>
    <property type="evidence" value="ECO:0007669"/>
    <property type="project" value="UniProtKB-UniRule"/>
</dbReference>
<dbReference type="GO" id="GO:0000976">
    <property type="term" value="F:transcription cis-regulatory region binding"/>
    <property type="evidence" value="ECO:0007669"/>
    <property type="project" value="TreeGrafter"/>
</dbReference>
<dbReference type="GO" id="GO:2000143">
    <property type="term" value="P:negative regulation of DNA-templated transcription initiation"/>
    <property type="evidence" value="ECO:0007669"/>
    <property type="project" value="TreeGrafter"/>
</dbReference>
<dbReference type="CDD" id="cd16321">
    <property type="entry name" value="MraZ_C"/>
    <property type="match status" value="1"/>
</dbReference>
<dbReference type="CDD" id="cd16320">
    <property type="entry name" value="MraZ_N"/>
    <property type="match status" value="1"/>
</dbReference>
<dbReference type="FunFam" id="3.40.1550.20:FF:000001">
    <property type="entry name" value="Transcriptional regulator MraZ"/>
    <property type="match status" value="1"/>
</dbReference>
<dbReference type="Gene3D" id="3.40.1550.20">
    <property type="entry name" value="Transcriptional regulator MraZ domain"/>
    <property type="match status" value="1"/>
</dbReference>
<dbReference type="HAMAP" id="MF_01008">
    <property type="entry name" value="MraZ"/>
    <property type="match status" value="1"/>
</dbReference>
<dbReference type="InterPro" id="IPR003444">
    <property type="entry name" value="MraZ"/>
</dbReference>
<dbReference type="InterPro" id="IPR035644">
    <property type="entry name" value="MraZ_C"/>
</dbReference>
<dbReference type="InterPro" id="IPR020603">
    <property type="entry name" value="MraZ_dom"/>
</dbReference>
<dbReference type="InterPro" id="IPR035642">
    <property type="entry name" value="MraZ_N"/>
</dbReference>
<dbReference type="InterPro" id="IPR038619">
    <property type="entry name" value="MraZ_sf"/>
</dbReference>
<dbReference type="InterPro" id="IPR007159">
    <property type="entry name" value="SpoVT-AbrB_dom"/>
</dbReference>
<dbReference type="InterPro" id="IPR037914">
    <property type="entry name" value="SpoVT-AbrB_sf"/>
</dbReference>
<dbReference type="NCBIfam" id="TIGR00242">
    <property type="entry name" value="division/cell wall cluster transcriptional repressor MraZ"/>
    <property type="match status" value="1"/>
</dbReference>
<dbReference type="PANTHER" id="PTHR34701">
    <property type="entry name" value="TRANSCRIPTIONAL REGULATOR MRAZ"/>
    <property type="match status" value="1"/>
</dbReference>
<dbReference type="PANTHER" id="PTHR34701:SF1">
    <property type="entry name" value="TRANSCRIPTIONAL REGULATOR MRAZ"/>
    <property type="match status" value="1"/>
</dbReference>
<dbReference type="Pfam" id="PF02381">
    <property type="entry name" value="MraZ"/>
    <property type="match status" value="2"/>
</dbReference>
<dbReference type="SUPFAM" id="SSF89447">
    <property type="entry name" value="AbrB/MazE/MraZ-like"/>
    <property type="match status" value="1"/>
</dbReference>
<dbReference type="PROSITE" id="PS51740">
    <property type="entry name" value="SPOVT_ABRB"/>
    <property type="match status" value="2"/>
</dbReference>
<sequence length="152" mass="17330">MFRGATLVNLDSKGRLSVPTRYREQLLENAAGQMVCTIDIHHPCLLLYPLPEWEIIEQKLSRLSSTNPVERRVQRLLLGHASECQMDGAGRLLIAPVLRQHAGLTKEVMLVGQFNKFELWDETTWHQQVKEDIDAEQLATGDLSERLQDLSL</sequence>
<reference key="1">
    <citation type="journal article" date="2009" name="J. Bacteriol.">
        <title>Complete genome sequence and comparative genome analysis of enteropathogenic Escherichia coli O127:H6 strain E2348/69.</title>
        <authorList>
            <person name="Iguchi A."/>
            <person name="Thomson N.R."/>
            <person name="Ogura Y."/>
            <person name="Saunders D."/>
            <person name="Ooka T."/>
            <person name="Henderson I.R."/>
            <person name="Harris D."/>
            <person name="Asadulghani M."/>
            <person name="Kurokawa K."/>
            <person name="Dean P."/>
            <person name="Kenny B."/>
            <person name="Quail M.A."/>
            <person name="Thurston S."/>
            <person name="Dougan G."/>
            <person name="Hayashi T."/>
            <person name="Parkhill J."/>
            <person name="Frankel G."/>
        </authorList>
    </citation>
    <scope>NUCLEOTIDE SEQUENCE [LARGE SCALE GENOMIC DNA]</scope>
    <source>
        <strain>E2348/69 / EPEC</strain>
    </source>
</reference>
<evidence type="ECO:0000255" key="1">
    <source>
        <dbReference type="HAMAP-Rule" id="MF_01008"/>
    </source>
</evidence>
<evidence type="ECO:0000255" key="2">
    <source>
        <dbReference type="PROSITE-ProRule" id="PRU01076"/>
    </source>
</evidence>
<name>MRAZ_ECO27</name>